<evidence type="ECO:0000255" key="1">
    <source>
        <dbReference type="HAMAP-Rule" id="MF_00315"/>
    </source>
</evidence>
<organism>
    <name type="scientific">Mycobacterium bovis (strain ATCC BAA-935 / AF2122/97)</name>
    <dbReference type="NCBI Taxonomy" id="233413"/>
    <lineage>
        <taxon>Bacteria</taxon>
        <taxon>Bacillati</taxon>
        <taxon>Actinomycetota</taxon>
        <taxon>Actinomycetes</taxon>
        <taxon>Mycobacteriales</taxon>
        <taxon>Mycobacteriaceae</taxon>
        <taxon>Mycobacterium</taxon>
        <taxon>Mycobacterium tuberculosis complex</taxon>
    </lineage>
</organism>
<keyword id="KW-0414">Isoprene biosynthesis</keyword>
<keyword id="KW-0460">Magnesium</keyword>
<keyword id="KW-0479">Metal-binding</keyword>
<keyword id="KW-1185">Reference proteome</keyword>
<keyword id="KW-0784">Thiamine biosynthesis</keyword>
<keyword id="KW-0786">Thiamine pyrophosphate</keyword>
<keyword id="KW-0808">Transferase</keyword>
<feature type="chain" id="PRO_0000189131" description="1-deoxy-D-xylulose-5-phosphate synthase">
    <location>
        <begin position="1"/>
        <end position="638"/>
    </location>
</feature>
<feature type="binding site" evidence="1">
    <location>
        <position position="71"/>
    </location>
    <ligand>
        <name>thiamine diphosphate</name>
        <dbReference type="ChEBI" id="CHEBI:58937"/>
    </ligand>
</feature>
<feature type="binding site" evidence="1">
    <location>
        <begin position="112"/>
        <end position="114"/>
    </location>
    <ligand>
        <name>thiamine diphosphate</name>
        <dbReference type="ChEBI" id="CHEBI:58937"/>
    </ligand>
</feature>
<feature type="binding site" evidence="1">
    <location>
        <position position="144"/>
    </location>
    <ligand>
        <name>Mg(2+)</name>
        <dbReference type="ChEBI" id="CHEBI:18420"/>
    </ligand>
</feature>
<feature type="binding site" evidence="1">
    <location>
        <begin position="145"/>
        <end position="146"/>
    </location>
    <ligand>
        <name>thiamine diphosphate</name>
        <dbReference type="ChEBI" id="CHEBI:58937"/>
    </ligand>
</feature>
<feature type="binding site" evidence="1">
    <location>
        <position position="173"/>
    </location>
    <ligand>
        <name>Mg(2+)</name>
        <dbReference type="ChEBI" id="CHEBI:18420"/>
    </ligand>
</feature>
<feature type="binding site" evidence="1">
    <location>
        <position position="173"/>
    </location>
    <ligand>
        <name>thiamine diphosphate</name>
        <dbReference type="ChEBI" id="CHEBI:58937"/>
    </ligand>
</feature>
<feature type="binding site" evidence="1">
    <location>
        <position position="284"/>
    </location>
    <ligand>
        <name>thiamine diphosphate</name>
        <dbReference type="ChEBI" id="CHEBI:58937"/>
    </ligand>
</feature>
<feature type="binding site" evidence="1">
    <location>
        <position position="365"/>
    </location>
    <ligand>
        <name>thiamine diphosphate</name>
        <dbReference type="ChEBI" id="CHEBI:58937"/>
    </ligand>
</feature>
<accession>P0A555</accession>
<accession>A0A1R3Y1W2</accession>
<accession>O07184</accession>
<accession>X2BLJ2</accession>
<sequence>MLQQIRGPADLQHLSQAQLRELAAEIREFLIHKVAATGGHLGPNLGVVELTLALHRVFDSPHDPIIFDTGHQAYVHKMLTGRSQDFATLRKKGGLSGYPSRAESEHDWVESSHASAALSYADGLAKAFELTGHRNRHVVAVVGDGALTGGMCWEALNNIAASRRPVIIVVNDNGRSYAPTIGGVADHLATLRLQPAYEQALETGRDLVRAVPLVGGLWFRFLHSVKAGIKDSLSPQLLFTDLGLKYVGPVDGHDERAVEVALRSARRFGAPVIVHVVTRKGMGYPPAEADQAEQMHSTVPIDPATGQATKVAGPGWTATFSDALIGYAQKRRDIVAITAAMPGPTGLTAFGQRFPDRLFDVGIAEQHAMTSAAGLAMGGLHPVVAIYSTFLNRAFDQIMMDVALHKLPVTMVLDRAGITGSDGASHNGMWDLSMLGIVPGIRVAAPRDATRLREELGEALDVDDGPTALRFPKGDVGEDISALERRGGVDVLAAPADGLNHDVLLVAIGAFAPMALAVAKRLHNQGIGVTVIDPRWVLPVSDGVRELAVQHKLLVTLEDNGVNGGAGSAVSAALRRAEIDVPCRDVGLPQEFYEHASRSEVLADLGLTDQDVARRITGWVAALGTGVCASDAIPEHLD</sequence>
<dbReference type="EC" id="2.2.1.7" evidence="1"/>
<dbReference type="EMBL" id="LT708304">
    <property type="protein sequence ID" value="SIU01319.1"/>
    <property type="molecule type" value="Genomic_DNA"/>
</dbReference>
<dbReference type="RefSeq" id="NP_856347.1">
    <property type="nucleotide sequence ID" value="NC_002945.3"/>
</dbReference>
<dbReference type="RefSeq" id="WP_003413891.1">
    <property type="nucleotide sequence ID" value="NC_002945.4"/>
</dbReference>
<dbReference type="SMR" id="P0A555"/>
<dbReference type="KEGG" id="mbo:BQ2027_MB2701C"/>
<dbReference type="PATRIC" id="fig|233413.5.peg.2960"/>
<dbReference type="UniPathway" id="UPA00064">
    <property type="reaction ID" value="UER00091"/>
</dbReference>
<dbReference type="Proteomes" id="UP000001419">
    <property type="component" value="Chromosome"/>
</dbReference>
<dbReference type="GO" id="GO:0005829">
    <property type="term" value="C:cytosol"/>
    <property type="evidence" value="ECO:0007669"/>
    <property type="project" value="TreeGrafter"/>
</dbReference>
<dbReference type="GO" id="GO:0008661">
    <property type="term" value="F:1-deoxy-D-xylulose-5-phosphate synthase activity"/>
    <property type="evidence" value="ECO:0007669"/>
    <property type="project" value="UniProtKB-UniRule"/>
</dbReference>
<dbReference type="GO" id="GO:0000287">
    <property type="term" value="F:magnesium ion binding"/>
    <property type="evidence" value="ECO:0007669"/>
    <property type="project" value="UniProtKB-UniRule"/>
</dbReference>
<dbReference type="GO" id="GO:0030976">
    <property type="term" value="F:thiamine pyrophosphate binding"/>
    <property type="evidence" value="ECO:0007669"/>
    <property type="project" value="UniProtKB-UniRule"/>
</dbReference>
<dbReference type="GO" id="GO:0052865">
    <property type="term" value="P:1-deoxy-D-xylulose 5-phosphate biosynthetic process"/>
    <property type="evidence" value="ECO:0007669"/>
    <property type="project" value="UniProtKB-UniPathway"/>
</dbReference>
<dbReference type="GO" id="GO:0019288">
    <property type="term" value="P:isopentenyl diphosphate biosynthetic process, methylerythritol 4-phosphate pathway"/>
    <property type="evidence" value="ECO:0007669"/>
    <property type="project" value="TreeGrafter"/>
</dbReference>
<dbReference type="GO" id="GO:0016114">
    <property type="term" value="P:terpenoid biosynthetic process"/>
    <property type="evidence" value="ECO:0007669"/>
    <property type="project" value="UniProtKB-UniRule"/>
</dbReference>
<dbReference type="GO" id="GO:0009228">
    <property type="term" value="P:thiamine biosynthetic process"/>
    <property type="evidence" value="ECO:0007669"/>
    <property type="project" value="UniProtKB-UniRule"/>
</dbReference>
<dbReference type="CDD" id="cd02007">
    <property type="entry name" value="TPP_DXS"/>
    <property type="match status" value="1"/>
</dbReference>
<dbReference type="CDD" id="cd07033">
    <property type="entry name" value="TPP_PYR_DXS_TK_like"/>
    <property type="match status" value="1"/>
</dbReference>
<dbReference type="FunFam" id="3.40.50.920:FF:000002">
    <property type="entry name" value="1-deoxy-D-xylulose-5-phosphate synthase"/>
    <property type="match status" value="1"/>
</dbReference>
<dbReference type="FunFam" id="3.40.50.970:FF:000005">
    <property type="entry name" value="1-deoxy-D-xylulose-5-phosphate synthase"/>
    <property type="match status" value="1"/>
</dbReference>
<dbReference type="Gene3D" id="3.40.50.920">
    <property type="match status" value="1"/>
</dbReference>
<dbReference type="Gene3D" id="3.40.50.970">
    <property type="match status" value="2"/>
</dbReference>
<dbReference type="HAMAP" id="MF_00315">
    <property type="entry name" value="DXP_synth"/>
    <property type="match status" value="1"/>
</dbReference>
<dbReference type="InterPro" id="IPR005477">
    <property type="entry name" value="Dxylulose-5-P_synthase"/>
</dbReference>
<dbReference type="InterPro" id="IPR029061">
    <property type="entry name" value="THDP-binding"/>
</dbReference>
<dbReference type="InterPro" id="IPR009014">
    <property type="entry name" value="Transketo_C/PFOR_II"/>
</dbReference>
<dbReference type="InterPro" id="IPR005475">
    <property type="entry name" value="Transketolase-like_Pyr-bd"/>
</dbReference>
<dbReference type="InterPro" id="IPR020826">
    <property type="entry name" value="Transketolase_BS"/>
</dbReference>
<dbReference type="InterPro" id="IPR033248">
    <property type="entry name" value="Transketolase_C"/>
</dbReference>
<dbReference type="InterPro" id="IPR049557">
    <property type="entry name" value="Transketolase_CS"/>
</dbReference>
<dbReference type="NCBIfam" id="TIGR00204">
    <property type="entry name" value="dxs"/>
    <property type="match status" value="1"/>
</dbReference>
<dbReference type="NCBIfam" id="NF003933">
    <property type="entry name" value="PRK05444.2-2"/>
    <property type="match status" value="1"/>
</dbReference>
<dbReference type="PANTHER" id="PTHR43322">
    <property type="entry name" value="1-D-DEOXYXYLULOSE 5-PHOSPHATE SYNTHASE-RELATED"/>
    <property type="match status" value="1"/>
</dbReference>
<dbReference type="PANTHER" id="PTHR43322:SF5">
    <property type="entry name" value="1-DEOXY-D-XYLULOSE-5-PHOSPHATE SYNTHASE, CHLOROPLASTIC"/>
    <property type="match status" value="1"/>
</dbReference>
<dbReference type="Pfam" id="PF13292">
    <property type="entry name" value="DXP_synthase_N"/>
    <property type="match status" value="1"/>
</dbReference>
<dbReference type="Pfam" id="PF02779">
    <property type="entry name" value="Transket_pyr"/>
    <property type="match status" value="1"/>
</dbReference>
<dbReference type="Pfam" id="PF02780">
    <property type="entry name" value="Transketolase_C"/>
    <property type="match status" value="1"/>
</dbReference>
<dbReference type="SMART" id="SM00861">
    <property type="entry name" value="Transket_pyr"/>
    <property type="match status" value="1"/>
</dbReference>
<dbReference type="SUPFAM" id="SSF52518">
    <property type="entry name" value="Thiamin diphosphate-binding fold (THDP-binding)"/>
    <property type="match status" value="2"/>
</dbReference>
<dbReference type="SUPFAM" id="SSF52922">
    <property type="entry name" value="TK C-terminal domain-like"/>
    <property type="match status" value="1"/>
</dbReference>
<dbReference type="PROSITE" id="PS00801">
    <property type="entry name" value="TRANSKETOLASE_1"/>
    <property type="match status" value="1"/>
</dbReference>
<dbReference type="PROSITE" id="PS00802">
    <property type="entry name" value="TRANSKETOLASE_2"/>
    <property type="match status" value="1"/>
</dbReference>
<proteinExistence type="inferred from homology"/>
<gene>
    <name evidence="1" type="primary">dxs</name>
    <name type="ordered locus">BQ2027_MB2701C</name>
</gene>
<reference key="1">
    <citation type="journal article" date="2003" name="Proc. Natl. Acad. Sci. U.S.A.">
        <title>The complete genome sequence of Mycobacterium bovis.</title>
        <authorList>
            <person name="Garnier T."/>
            <person name="Eiglmeier K."/>
            <person name="Camus J.-C."/>
            <person name="Medina N."/>
            <person name="Mansoor H."/>
            <person name="Pryor M."/>
            <person name="Duthoy S."/>
            <person name="Grondin S."/>
            <person name="Lacroix C."/>
            <person name="Monsempe C."/>
            <person name="Simon S."/>
            <person name="Harris B."/>
            <person name="Atkin R."/>
            <person name="Doggett J."/>
            <person name="Mayes R."/>
            <person name="Keating L."/>
            <person name="Wheeler P.R."/>
            <person name="Parkhill J."/>
            <person name="Barrell B.G."/>
            <person name="Cole S.T."/>
            <person name="Gordon S.V."/>
            <person name="Hewinson R.G."/>
        </authorList>
    </citation>
    <scope>NUCLEOTIDE SEQUENCE [LARGE SCALE GENOMIC DNA]</scope>
    <source>
        <strain>ATCC BAA-935 / AF2122/97</strain>
    </source>
</reference>
<reference key="2">
    <citation type="journal article" date="2017" name="Genome Announc.">
        <title>Updated reference genome sequence and annotation of Mycobacterium bovis AF2122/97.</title>
        <authorList>
            <person name="Malone K.M."/>
            <person name="Farrell D."/>
            <person name="Stuber T.P."/>
            <person name="Schubert O.T."/>
            <person name="Aebersold R."/>
            <person name="Robbe-Austerman S."/>
            <person name="Gordon S.V."/>
        </authorList>
    </citation>
    <scope>NUCLEOTIDE SEQUENCE [LARGE SCALE GENOMIC DNA]</scope>
    <scope>GENOME REANNOTATION</scope>
    <source>
        <strain>ATCC BAA-935 / AF2122/97</strain>
    </source>
</reference>
<name>DXS_MYCBO</name>
<protein>
    <recommendedName>
        <fullName evidence="1">1-deoxy-D-xylulose-5-phosphate synthase</fullName>
        <ecNumber evidence="1">2.2.1.7</ecNumber>
    </recommendedName>
    <alternativeName>
        <fullName evidence="1">1-deoxyxylulose-5-phosphate synthase</fullName>
        <shortName evidence="1">DXP synthase</shortName>
        <shortName evidence="1">DXPS</shortName>
    </alternativeName>
</protein>
<comment type="function">
    <text evidence="1">Catalyzes the acyloin condensation reaction between C atoms 2 and 3 of pyruvate and glyceraldehyde 3-phosphate to yield 1-deoxy-D-xylulose-5-phosphate (DXP).</text>
</comment>
<comment type="catalytic activity">
    <reaction evidence="1">
        <text>D-glyceraldehyde 3-phosphate + pyruvate + H(+) = 1-deoxy-D-xylulose 5-phosphate + CO2</text>
        <dbReference type="Rhea" id="RHEA:12605"/>
        <dbReference type="ChEBI" id="CHEBI:15361"/>
        <dbReference type="ChEBI" id="CHEBI:15378"/>
        <dbReference type="ChEBI" id="CHEBI:16526"/>
        <dbReference type="ChEBI" id="CHEBI:57792"/>
        <dbReference type="ChEBI" id="CHEBI:59776"/>
        <dbReference type="EC" id="2.2.1.7"/>
    </reaction>
</comment>
<comment type="cofactor">
    <cofactor evidence="1">
        <name>Mg(2+)</name>
        <dbReference type="ChEBI" id="CHEBI:18420"/>
    </cofactor>
    <text evidence="1">Binds 1 Mg(2+) ion per subunit.</text>
</comment>
<comment type="cofactor">
    <cofactor evidence="1">
        <name>thiamine diphosphate</name>
        <dbReference type="ChEBI" id="CHEBI:58937"/>
    </cofactor>
    <text evidence="1">Binds 1 thiamine pyrophosphate per subunit.</text>
</comment>
<comment type="pathway">
    <text evidence="1">Metabolic intermediate biosynthesis; 1-deoxy-D-xylulose 5-phosphate biosynthesis; 1-deoxy-D-xylulose 5-phosphate from D-glyceraldehyde 3-phosphate and pyruvate: step 1/1.</text>
</comment>
<comment type="subunit">
    <text evidence="1">Homodimer.</text>
</comment>
<comment type="similarity">
    <text evidence="1">Belongs to the transketolase family. DXPS subfamily.</text>
</comment>